<comment type="function">
    <text evidence="1">Transaldolase is important for the balance of metabolites in the pentose-phosphate pathway.</text>
</comment>
<comment type="catalytic activity">
    <reaction evidence="1">
        <text>D-sedoheptulose 7-phosphate + D-glyceraldehyde 3-phosphate = D-erythrose 4-phosphate + beta-D-fructose 6-phosphate</text>
        <dbReference type="Rhea" id="RHEA:17053"/>
        <dbReference type="ChEBI" id="CHEBI:16897"/>
        <dbReference type="ChEBI" id="CHEBI:57483"/>
        <dbReference type="ChEBI" id="CHEBI:57634"/>
        <dbReference type="ChEBI" id="CHEBI:59776"/>
        <dbReference type="EC" id="2.2.1.2"/>
    </reaction>
</comment>
<comment type="pathway">
    <text evidence="1">Carbohydrate degradation; pentose phosphate pathway; D-glyceraldehyde 3-phosphate and beta-D-fructose 6-phosphate from D-ribose 5-phosphate and D-xylulose 5-phosphate (non-oxidative stage): step 2/3.</text>
</comment>
<comment type="subcellular location">
    <subcellularLocation>
        <location evidence="1">Cytoplasm</location>
    </subcellularLocation>
</comment>
<comment type="similarity">
    <text evidence="1 3">Belongs to the transaldolase family. Type 1 subfamily.</text>
</comment>
<evidence type="ECO:0000255" key="1">
    <source>
        <dbReference type="HAMAP-Rule" id="MF_00492"/>
    </source>
</evidence>
<evidence type="ECO:0000255" key="2">
    <source>
        <dbReference type="PROSITE-ProRule" id="PRU10142"/>
    </source>
</evidence>
<evidence type="ECO:0000305" key="3"/>
<proteinExistence type="inferred from homology"/>
<keyword id="KW-0106">Calcium</keyword>
<keyword id="KW-0963">Cytoplasm</keyword>
<keyword id="KW-0479">Metal-binding</keyword>
<keyword id="KW-0570">Pentose shunt</keyword>
<keyword id="KW-1185">Reference proteome</keyword>
<keyword id="KW-0677">Repeat</keyword>
<keyword id="KW-0704">Schiff base</keyword>
<keyword id="KW-0808">Transferase</keyword>
<protein>
    <recommendedName>
        <fullName evidence="1">Transaldolase</fullName>
        <ecNumber evidence="1">2.2.1.2</ecNumber>
    </recommendedName>
</protein>
<name>TAL_THEVB</name>
<gene>
    <name evidence="1" type="primary">tal</name>
    <name type="ordered locus">tll0467</name>
</gene>
<reference key="1">
    <citation type="journal article" date="2002" name="DNA Res.">
        <title>Complete genome structure of the thermophilic cyanobacterium Thermosynechococcus elongatus BP-1.</title>
        <authorList>
            <person name="Nakamura Y."/>
            <person name="Kaneko T."/>
            <person name="Sato S."/>
            <person name="Ikeuchi M."/>
            <person name="Katoh H."/>
            <person name="Sasamoto S."/>
            <person name="Watanabe A."/>
            <person name="Iriguchi M."/>
            <person name="Kawashima K."/>
            <person name="Kimura T."/>
            <person name="Kishida Y."/>
            <person name="Kiyokawa C."/>
            <person name="Kohara M."/>
            <person name="Matsumoto M."/>
            <person name="Matsuno A."/>
            <person name="Nakazaki N."/>
            <person name="Shimpo S."/>
            <person name="Sugimoto M."/>
            <person name="Takeuchi C."/>
            <person name="Yamada M."/>
            <person name="Tabata S."/>
        </authorList>
    </citation>
    <scope>NUCLEOTIDE SEQUENCE [LARGE SCALE GENOMIC DNA]</scope>
    <source>
        <strain>NIES-2133 / IAM M-273 / BP-1</strain>
    </source>
</reference>
<accession>Q8DLL7</accession>
<organism>
    <name type="scientific">Thermosynechococcus vestitus (strain NIES-2133 / IAM M-273 / BP-1)</name>
    <dbReference type="NCBI Taxonomy" id="197221"/>
    <lineage>
        <taxon>Bacteria</taxon>
        <taxon>Bacillati</taxon>
        <taxon>Cyanobacteriota</taxon>
        <taxon>Cyanophyceae</taxon>
        <taxon>Acaryochloridales</taxon>
        <taxon>Thermosynechococcaceae</taxon>
        <taxon>Thermosynechococcus</taxon>
    </lineage>
</organism>
<dbReference type="EC" id="2.2.1.2" evidence="1"/>
<dbReference type="EMBL" id="BA000039">
    <property type="protein sequence ID" value="BAC08019.1"/>
    <property type="molecule type" value="Genomic_DNA"/>
</dbReference>
<dbReference type="RefSeq" id="NP_681257.1">
    <property type="nucleotide sequence ID" value="NC_004113.1"/>
</dbReference>
<dbReference type="RefSeq" id="WP_011056320.1">
    <property type="nucleotide sequence ID" value="NC_004113.1"/>
</dbReference>
<dbReference type="SMR" id="Q8DLL7"/>
<dbReference type="STRING" id="197221.gene:10747056"/>
<dbReference type="EnsemblBacteria" id="BAC08019">
    <property type="protein sequence ID" value="BAC08019"/>
    <property type="gene ID" value="BAC08019"/>
</dbReference>
<dbReference type="KEGG" id="tel:tll0467"/>
<dbReference type="PATRIC" id="fig|197221.4.peg.492"/>
<dbReference type="eggNOG" id="COG0176">
    <property type="taxonomic scope" value="Bacteria"/>
</dbReference>
<dbReference type="UniPathway" id="UPA00115">
    <property type="reaction ID" value="UER00414"/>
</dbReference>
<dbReference type="Proteomes" id="UP000000440">
    <property type="component" value="Chromosome"/>
</dbReference>
<dbReference type="GO" id="GO:0005737">
    <property type="term" value="C:cytoplasm"/>
    <property type="evidence" value="ECO:0007669"/>
    <property type="project" value="UniProtKB-SubCell"/>
</dbReference>
<dbReference type="GO" id="GO:0005509">
    <property type="term" value="F:calcium ion binding"/>
    <property type="evidence" value="ECO:0007669"/>
    <property type="project" value="InterPro"/>
</dbReference>
<dbReference type="GO" id="GO:0004801">
    <property type="term" value="F:transaldolase activity"/>
    <property type="evidence" value="ECO:0000250"/>
    <property type="project" value="UniProtKB"/>
</dbReference>
<dbReference type="GO" id="GO:0005975">
    <property type="term" value="P:carbohydrate metabolic process"/>
    <property type="evidence" value="ECO:0007669"/>
    <property type="project" value="InterPro"/>
</dbReference>
<dbReference type="GO" id="GO:0006098">
    <property type="term" value="P:pentose-phosphate shunt"/>
    <property type="evidence" value="ECO:0007669"/>
    <property type="project" value="UniProtKB-UniRule"/>
</dbReference>
<dbReference type="CDD" id="cd00051">
    <property type="entry name" value="EFh"/>
    <property type="match status" value="1"/>
</dbReference>
<dbReference type="CDD" id="cd00957">
    <property type="entry name" value="Transaldolase_TalAB"/>
    <property type="match status" value="1"/>
</dbReference>
<dbReference type="FunFam" id="3.20.20.70:FF:000002">
    <property type="entry name" value="Transaldolase"/>
    <property type="match status" value="1"/>
</dbReference>
<dbReference type="Gene3D" id="3.20.20.70">
    <property type="entry name" value="Aldolase class I"/>
    <property type="match status" value="1"/>
</dbReference>
<dbReference type="Gene3D" id="1.10.238.10">
    <property type="entry name" value="EF-hand"/>
    <property type="match status" value="1"/>
</dbReference>
<dbReference type="HAMAP" id="MF_00492">
    <property type="entry name" value="Transaldolase_1"/>
    <property type="match status" value="1"/>
</dbReference>
<dbReference type="InterPro" id="IPR013785">
    <property type="entry name" value="Aldolase_TIM"/>
</dbReference>
<dbReference type="InterPro" id="IPR011992">
    <property type="entry name" value="EF-hand-dom_pair"/>
</dbReference>
<dbReference type="InterPro" id="IPR018247">
    <property type="entry name" value="EF_Hand_1_Ca_BS"/>
</dbReference>
<dbReference type="InterPro" id="IPR002048">
    <property type="entry name" value="EF_hand_dom"/>
</dbReference>
<dbReference type="InterPro" id="IPR001585">
    <property type="entry name" value="TAL/FSA"/>
</dbReference>
<dbReference type="InterPro" id="IPR004730">
    <property type="entry name" value="Transaldolase_1"/>
</dbReference>
<dbReference type="InterPro" id="IPR018225">
    <property type="entry name" value="Transaldolase_AS"/>
</dbReference>
<dbReference type="NCBIfam" id="NF008965">
    <property type="entry name" value="PRK12309.1"/>
    <property type="match status" value="1"/>
</dbReference>
<dbReference type="NCBIfam" id="TIGR00874">
    <property type="entry name" value="talAB"/>
    <property type="match status" value="1"/>
</dbReference>
<dbReference type="PANTHER" id="PTHR10683">
    <property type="entry name" value="TRANSALDOLASE"/>
    <property type="match status" value="1"/>
</dbReference>
<dbReference type="PANTHER" id="PTHR10683:SF18">
    <property type="entry name" value="TRANSALDOLASE"/>
    <property type="match status" value="1"/>
</dbReference>
<dbReference type="Pfam" id="PF13202">
    <property type="entry name" value="EF-hand_5"/>
    <property type="match status" value="2"/>
</dbReference>
<dbReference type="Pfam" id="PF00923">
    <property type="entry name" value="TAL_FSA"/>
    <property type="match status" value="1"/>
</dbReference>
<dbReference type="SUPFAM" id="SSF51569">
    <property type="entry name" value="Aldolase"/>
    <property type="match status" value="1"/>
</dbReference>
<dbReference type="SUPFAM" id="SSF47473">
    <property type="entry name" value="EF-hand"/>
    <property type="match status" value="1"/>
</dbReference>
<dbReference type="PROSITE" id="PS00018">
    <property type="entry name" value="EF_HAND_1"/>
    <property type="match status" value="2"/>
</dbReference>
<dbReference type="PROSITE" id="PS50222">
    <property type="entry name" value="EF_HAND_2"/>
    <property type="match status" value="2"/>
</dbReference>
<dbReference type="PROSITE" id="PS01054">
    <property type="entry name" value="TRANSALDOLASE_1"/>
    <property type="match status" value="1"/>
</dbReference>
<dbReference type="PROSITE" id="PS00958">
    <property type="entry name" value="TRANSALDOLASE_2"/>
    <property type="match status" value="1"/>
</dbReference>
<feature type="chain" id="PRO_0000173617" description="Transaldolase">
    <location>
        <begin position="1"/>
        <end position="391"/>
    </location>
</feature>
<feature type="domain" description="EF-hand 1">
    <location>
        <begin position="329"/>
        <end position="364"/>
    </location>
</feature>
<feature type="domain" description="EF-hand 2">
    <location>
        <begin position="365"/>
        <end position="387"/>
    </location>
</feature>
<feature type="active site" description="Schiff-base intermediate with substrate" evidence="1">
    <location>
        <position position="134"/>
    </location>
</feature>
<feature type="binding site" evidence="2">
    <location>
        <position position="342"/>
    </location>
    <ligand>
        <name>Ca(2+)</name>
        <dbReference type="ChEBI" id="CHEBI:29108"/>
        <label>1</label>
    </ligand>
</feature>
<feature type="binding site" evidence="2">
    <location>
        <position position="344"/>
    </location>
    <ligand>
        <name>Ca(2+)</name>
        <dbReference type="ChEBI" id="CHEBI:29108"/>
        <label>1</label>
    </ligand>
</feature>
<feature type="binding site" evidence="2">
    <location>
        <position position="346"/>
    </location>
    <ligand>
        <name>Ca(2+)</name>
        <dbReference type="ChEBI" id="CHEBI:29108"/>
        <label>1</label>
    </ligand>
</feature>
<feature type="binding site" evidence="2">
    <location>
        <position position="353"/>
    </location>
    <ligand>
        <name>Ca(2+)</name>
        <dbReference type="ChEBI" id="CHEBI:29108"/>
        <label>1</label>
    </ligand>
</feature>
<feature type="binding site" evidence="2">
    <location>
        <position position="365"/>
    </location>
    <ligand>
        <name>Ca(2+)</name>
        <dbReference type="ChEBI" id="CHEBI:29108"/>
        <label>2</label>
    </ligand>
</feature>
<feature type="binding site" evidence="2">
    <location>
        <position position="367"/>
    </location>
    <ligand>
        <name>Ca(2+)</name>
        <dbReference type="ChEBI" id="CHEBI:29108"/>
        <label>2</label>
    </ligand>
</feature>
<feature type="binding site" evidence="2">
    <location>
        <position position="369"/>
    </location>
    <ligand>
        <name>Ca(2+)</name>
        <dbReference type="ChEBI" id="CHEBI:29108"/>
        <label>2</label>
    </ligand>
</feature>
<feature type="binding site" evidence="2">
    <location>
        <position position="371"/>
    </location>
    <ligand>
        <name>Ca(2+)</name>
        <dbReference type="ChEBI" id="CHEBI:29108"/>
        <label>2</label>
    </ligand>
</feature>
<feature type="binding site" evidence="2">
    <location>
        <position position="376"/>
    </location>
    <ligand>
        <name>Ca(2+)</name>
        <dbReference type="ChEBI" id="CHEBI:29108"/>
        <label>2</label>
    </ligand>
</feature>
<sequence length="391" mass="42699">MNLLEQLRQMTVVVADTGDILAIQKFTPRDATTNPSLITAAAQMKEYQSIVDETLRQAKADLGSGATSREIVSLAVDRLAVAFGLKILQIIPGRVSTEVDARLSYDTAATVQKARELISQYEAAGVGRDRVLIKIAATWEGIRAAEILEKEGIHCNLTLLFGFHQAVACAEAGVTLISPFVGRILDWYKKKTGRAEYPGPEDPGVISVTKIYNYYKKFGYPTEVMGASFRNIGEIIELAGCDLLTISPALLQELQNTTGELKRKLDPAIAATLDIEKVAMDEATFRKMHAADEMASEKLEEGIKGFTKALETLEDLLRRHLARIEGEATLTHAAEELFHVYDLDGDGIITREEWLGTDAVFDALDANHDGKVTPEDMGAGLGVVLHLAQAK</sequence>